<name>YQGF_BACCZ</name>
<feature type="chain" id="PRO_0000172017" description="Putative pre-16S rRNA nuclease">
    <location>
        <begin position="1"/>
        <end position="137"/>
    </location>
</feature>
<accession>Q634F8</accession>
<dbReference type="EC" id="3.1.-.-" evidence="1"/>
<dbReference type="EMBL" id="CP000001">
    <property type="protein sequence ID" value="AAU16139.1"/>
    <property type="molecule type" value="Genomic_DNA"/>
</dbReference>
<dbReference type="SMR" id="Q634F8"/>
<dbReference type="KEGG" id="bcz:BCE33L4130"/>
<dbReference type="PATRIC" id="fig|288681.22.peg.1254"/>
<dbReference type="Proteomes" id="UP000002612">
    <property type="component" value="Chromosome"/>
</dbReference>
<dbReference type="GO" id="GO:0005829">
    <property type="term" value="C:cytosol"/>
    <property type="evidence" value="ECO:0007669"/>
    <property type="project" value="TreeGrafter"/>
</dbReference>
<dbReference type="GO" id="GO:0004518">
    <property type="term" value="F:nuclease activity"/>
    <property type="evidence" value="ECO:0007669"/>
    <property type="project" value="UniProtKB-KW"/>
</dbReference>
<dbReference type="GO" id="GO:0000967">
    <property type="term" value="P:rRNA 5'-end processing"/>
    <property type="evidence" value="ECO:0007669"/>
    <property type="project" value="UniProtKB-UniRule"/>
</dbReference>
<dbReference type="CDD" id="cd16964">
    <property type="entry name" value="YqgF"/>
    <property type="match status" value="1"/>
</dbReference>
<dbReference type="FunFam" id="3.30.420.140:FF:000003">
    <property type="entry name" value="Putative pre-16S rRNA nuclease"/>
    <property type="match status" value="1"/>
</dbReference>
<dbReference type="Gene3D" id="3.30.420.140">
    <property type="entry name" value="YqgF/RNase H-like domain"/>
    <property type="match status" value="1"/>
</dbReference>
<dbReference type="HAMAP" id="MF_00651">
    <property type="entry name" value="Nuclease_YqgF"/>
    <property type="match status" value="1"/>
</dbReference>
<dbReference type="InterPro" id="IPR012337">
    <property type="entry name" value="RNaseH-like_sf"/>
</dbReference>
<dbReference type="InterPro" id="IPR005227">
    <property type="entry name" value="YqgF"/>
</dbReference>
<dbReference type="InterPro" id="IPR006641">
    <property type="entry name" value="YqgF/RNaseH-like_dom"/>
</dbReference>
<dbReference type="InterPro" id="IPR037027">
    <property type="entry name" value="YqgF/RNaseH-like_dom_sf"/>
</dbReference>
<dbReference type="NCBIfam" id="TIGR00250">
    <property type="entry name" value="RNAse_H_YqgF"/>
    <property type="match status" value="1"/>
</dbReference>
<dbReference type="PANTHER" id="PTHR33317">
    <property type="entry name" value="POLYNUCLEOTIDYL TRANSFERASE, RIBONUCLEASE H-LIKE SUPERFAMILY PROTEIN"/>
    <property type="match status" value="1"/>
</dbReference>
<dbReference type="PANTHER" id="PTHR33317:SF4">
    <property type="entry name" value="POLYNUCLEOTIDYL TRANSFERASE, RIBONUCLEASE H-LIKE SUPERFAMILY PROTEIN"/>
    <property type="match status" value="1"/>
</dbReference>
<dbReference type="Pfam" id="PF03652">
    <property type="entry name" value="RuvX"/>
    <property type="match status" value="1"/>
</dbReference>
<dbReference type="SMART" id="SM00732">
    <property type="entry name" value="YqgFc"/>
    <property type="match status" value="1"/>
</dbReference>
<dbReference type="SUPFAM" id="SSF53098">
    <property type="entry name" value="Ribonuclease H-like"/>
    <property type="match status" value="1"/>
</dbReference>
<evidence type="ECO:0000255" key="1">
    <source>
        <dbReference type="HAMAP-Rule" id="MF_00651"/>
    </source>
</evidence>
<keyword id="KW-0963">Cytoplasm</keyword>
<keyword id="KW-0378">Hydrolase</keyword>
<keyword id="KW-0540">Nuclease</keyword>
<keyword id="KW-0690">Ribosome biogenesis</keyword>
<organism>
    <name type="scientific">Bacillus cereus (strain ZK / E33L)</name>
    <dbReference type="NCBI Taxonomy" id="288681"/>
    <lineage>
        <taxon>Bacteria</taxon>
        <taxon>Bacillati</taxon>
        <taxon>Bacillota</taxon>
        <taxon>Bacilli</taxon>
        <taxon>Bacillales</taxon>
        <taxon>Bacillaceae</taxon>
        <taxon>Bacillus</taxon>
        <taxon>Bacillus cereus group</taxon>
    </lineage>
</organism>
<gene>
    <name type="ordered locus">BCE33L4130</name>
</gene>
<comment type="function">
    <text evidence="1">Could be a nuclease involved in processing of the 5'-end of pre-16S rRNA.</text>
</comment>
<comment type="subcellular location">
    <subcellularLocation>
        <location evidence="1">Cytoplasm</location>
    </subcellularLocation>
</comment>
<comment type="similarity">
    <text evidence="1">Belongs to the YqgF nuclease family.</text>
</comment>
<sequence>MRILGLDVGTKTVGVAISDEMGWTAQGLETIKINEERGQFGFDRISELVKQYDVDKIVVGLPKNMNGTIGPRGEACQQFAENLRELLQLDVVMWDERLSTMAAERLLISADVSRKKRKQVIDKMAAVVILQGFLDSK</sequence>
<reference key="1">
    <citation type="journal article" date="2006" name="J. Bacteriol.">
        <title>Pathogenomic sequence analysis of Bacillus cereus and Bacillus thuringiensis isolates closely related to Bacillus anthracis.</title>
        <authorList>
            <person name="Han C.S."/>
            <person name="Xie G."/>
            <person name="Challacombe J.F."/>
            <person name="Altherr M.R."/>
            <person name="Bhotika S.S."/>
            <person name="Bruce D."/>
            <person name="Campbell C.S."/>
            <person name="Campbell M.L."/>
            <person name="Chen J."/>
            <person name="Chertkov O."/>
            <person name="Cleland C."/>
            <person name="Dimitrijevic M."/>
            <person name="Doggett N.A."/>
            <person name="Fawcett J.J."/>
            <person name="Glavina T."/>
            <person name="Goodwin L.A."/>
            <person name="Hill K.K."/>
            <person name="Hitchcock P."/>
            <person name="Jackson P.J."/>
            <person name="Keim P."/>
            <person name="Kewalramani A.R."/>
            <person name="Longmire J."/>
            <person name="Lucas S."/>
            <person name="Malfatti S."/>
            <person name="McMurry K."/>
            <person name="Meincke L.J."/>
            <person name="Misra M."/>
            <person name="Moseman B.L."/>
            <person name="Mundt M."/>
            <person name="Munk A.C."/>
            <person name="Okinaka R.T."/>
            <person name="Parson-Quintana B."/>
            <person name="Reilly L.P."/>
            <person name="Richardson P."/>
            <person name="Robinson D.L."/>
            <person name="Rubin E."/>
            <person name="Saunders E."/>
            <person name="Tapia R."/>
            <person name="Tesmer J.G."/>
            <person name="Thayer N."/>
            <person name="Thompson L.S."/>
            <person name="Tice H."/>
            <person name="Ticknor L.O."/>
            <person name="Wills P.L."/>
            <person name="Brettin T.S."/>
            <person name="Gilna P."/>
        </authorList>
    </citation>
    <scope>NUCLEOTIDE SEQUENCE [LARGE SCALE GENOMIC DNA]</scope>
    <source>
        <strain>ZK / E33L</strain>
    </source>
</reference>
<proteinExistence type="inferred from homology"/>
<protein>
    <recommendedName>
        <fullName evidence="1">Putative pre-16S rRNA nuclease</fullName>
        <ecNumber evidence="1">3.1.-.-</ecNumber>
    </recommendedName>
</protein>